<proteinExistence type="inferred from homology"/>
<sequence length="268" mass="29169">MDFFNLLEAAFLGLIEGLTEFIPVSSTGHLLLIGHFLGFESTGKTFEVLIQLGAILAILSVYSAKLARIATDFPRDARTRRFVLGVLVAFLPAAVIGALAHGFIKGVLFETPMLVCIMLIVGGFILLWVDQLNLRPRYHNVMDYPLPICLAIGFIQCLAMIPGVSRSGSTIVGSLLLGADKRSAAEFSFFLAMPTMAGAFAYDLFKSRNILSFNDGALIVVGFIMAFISGVFVVRHLLDYVSRHGFALFGWWRLIVGSAGMAALIIWG</sequence>
<comment type="function">
    <text evidence="1">Catalyzes the dephosphorylation of undecaprenyl diphosphate (UPP). Confers resistance to bacitracin.</text>
</comment>
<comment type="catalytic activity">
    <reaction evidence="1">
        <text>di-trans,octa-cis-undecaprenyl diphosphate + H2O = di-trans,octa-cis-undecaprenyl phosphate + phosphate + H(+)</text>
        <dbReference type="Rhea" id="RHEA:28094"/>
        <dbReference type="ChEBI" id="CHEBI:15377"/>
        <dbReference type="ChEBI" id="CHEBI:15378"/>
        <dbReference type="ChEBI" id="CHEBI:43474"/>
        <dbReference type="ChEBI" id="CHEBI:58405"/>
        <dbReference type="ChEBI" id="CHEBI:60392"/>
        <dbReference type="EC" id="3.6.1.27"/>
    </reaction>
</comment>
<comment type="subcellular location">
    <subcellularLocation>
        <location evidence="1">Cell inner membrane</location>
        <topology evidence="1">Multi-pass membrane protein</topology>
    </subcellularLocation>
</comment>
<comment type="miscellaneous">
    <text>Bacitracin is thought to be involved in the inhibition of peptidoglycan synthesis by sequestering undecaprenyl diphosphate, thereby reducing the pool of lipid carrier available.</text>
</comment>
<comment type="similarity">
    <text evidence="1">Belongs to the UppP family.</text>
</comment>
<organism>
    <name type="scientific">Brucella abortus (strain 2308)</name>
    <dbReference type="NCBI Taxonomy" id="359391"/>
    <lineage>
        <taxon>Bacteria</taxon>
        <taxon>Pseudomonadati</taxon>
        <taxon>Pseudomonadota</taxon>
        <taxon>Alphaproteobacteria</taxon>
        <taxon>Hyphomicrobiales</taxon>
        <taxon>Brucellaceae</taxon>
        <taxon>Brucella/Ochrobactrum group</taxon>
        <taxon>Brucella</taxon>
    </lineage>
</organism>
<keyword id="KW-0046">Antibiotic resistance</keyword>
<keyword id="KW-0997">Cell inner membrane</keyword>
<keyword id="KW-1003">Cell membrane</keyword>
<keyword id="KW-0133">Cell shape</keyword>
<keyword id="KW-0961">Cell wall biogenesis/degradation</keyword>
<keyword id="KW-0378">Hydrolase</keyword>
<keyword id="KW-0472">Membrane</keyword>
<keyword id="KW-0573">Peptidoglycan synthesis</keyword>
<keyword id="KW-1185">Reference proteome</keyword>
<keyword id="KW-0812">Transmembrane</keyword>
<keyword id="KW-1133">Transmembrane helix</keyword>
<name>UPPP_BRUA2</name>
<evidence type="ECO:0000255" key="1">
    <source>
        <dbReference type="HAMAP-Rule" id="MF_01006"/>
    </source>
</evidence>
<reference key="1">
    <citation type="journal article" date="2005" name="Infect. Immun.">
        <title>Whole-genome analyses of speciation events in pathogenic Brucellae.</title>
        <authorList>
            <person name="Chain P.S."/>
            <person name="Comerci D.J."/>
            <person name="Tolmasky M.E."/>
            <person name="Larimer F.W."/>
            <person name="Malfatti S.A."/>
            <person name="Vergez L.M."/>
            <person name="Aguero F."/>
            <person name="Land M.L."/>
            <person name="Ugalde R.A."/>
            <person name="Garcia E."/>
        </authorList>
    </citation>
    <scope>NUCLEOTIDE SEQUENCE [LARGE SCALE GENOMIC DNA]</scope>
    <source>
        <strain>2308</strain>
    </source>
</reference>
<dbReference type="EC" id="3.6.1.27" evidence="1"/>
<dbReference type="EMBL" id="AM040265">
    <property type="protein sequence ID" value="CAJ13169.1"/>
    <property type="molecule type" value="Genomic_DNA"/>
</dbReference>
<dbReference type="RefSeq" id="WP_002965610.1">
    <property type="nucleotide sequence ID" value="NZ_KN046823.1"/>
</dbReference>
<dbReference type="SMR" id="Q2YJP6"/>
<dbReference type="STRING" id="359391.BAB2_1003"/>
<dbReference type="KEGG" id="bmf:BAB2_1003"/>
<dbReference type="PATRIC" id="fig|359391.11.peg.691"/>
<dbReference type="HOGENOM" id="CLU_060296_2_0_5"/>
<dbReference type="PhylomeDB" id="Q2YJP6"/>
<dbReference type="Proteomes" id="UP000002719">
    <property type="component" value="Chromosome II"/>
</dbReference>
<dbReference type="GO" id="GO:0005886">
    <property type="term" value="C:plasma membrane"/>
    <property type="evidence" value="ECO:0007669"/>
    <property type="project" value="UniProtKB-SubCell"/>
</dbReference>
<dbReference type="GO" id="GO:0050380">
    <property type="term" value="F:undecaprenyl-diphosphatase activity"/>
    <property type="evidence" value="ECO:0007669"/>
    <property type="project" value="UniProtKB-UniRule"/>
</dbReference>
<dbReference type="GO" id="GO:0071555">
    <property type="term" value="P:cell wall organization"/>
    <property type="evidence" value="ECO:0007669"/>
    <property type="project" value="UniProtKB-KW"/>
</dbReference>
<dbReference type="GO" id="GO:0009252">
    <property type="term" value="P:peptidoglycan biosynthetic process"/>
    <property type="evidence" value="ECO:0007669"/>
    <property type="project" value="UniProtKB-KW"/>
</dbReference>
<dbReference type="GO" id="GO:0008360">
    <property type="term" value="P:regulation of cell shape"/>
    <property type="evidence" value="ECO:0007669"/>
    <property type="project" value="UniProtKB-KW"/>
</dbReference>
<dbReference type="GO" id="GO:0046677">
    <property type="term" value="P:response to antibiotic"/>
    <property type="evidence" value="ECO:0007669"/>
    <property type="project" value="UniProtKB-UniRule"/>
</dbReference>
<dbReference type="HAMAP" id="MF_01006">
    <property type="entry name" value="Undec_diphosphatase"/>
    <property type="match status" value="1"/>
</dbReference>
<dbReference type="InterPro" id="IPR003824">
    <property type="entry name" value="UppP"/>
</dbReference>
<dbReference type="NCBIfam" id="NF001389">
    <property type="entry name" value="PRK00281.1-2"/>
    <property type="match status" value="1"/>
</dbReference>
<dbReference type="NCBIfam" id="TIGR00753">
    <property type="entry name" value="undec_PP_bacA"/>
    <property type="match status" value="1"/>
</dbReference>
<dbReference type="PANTHER" id="PTHR30622">
    <property type="entry name" value="UNDECAPRENYL-DIPHOSPHATASE"/>
    <property type="match status" value="1"/>
</dbReference>
<dbReference type="PANTHER" id="PTHR30622:SF3">
    <property type="entry name" value="UNDECAPRENYL-DIPHOSPHATASE"/>
    <property type="match status" value="1"/>
</dbReference>
<dbReference type="Pfam" id="PF02673">
    <property type="entry name" value="BacA"/>
    <property type="match status" value="1"/>
</dbReference>
<gene>
    <name evidence="1" type="primary">uppP</name>
    <name type="ordered locus">BAB2_1003</name>
</gene>
<feature type="chain" id="PRO_0000227607" description="Undecaprenyl-diphosphatase">
    <location>
        <begin position="1"/>
        <end position="268"/>
    </location>
</feature>
<feature type="transmembrane region" description="Helical" evidence="1">
    <location>
        <begin position="3"/>
        <end position="23"/>
    </location>
</feature>
<feature type="transmembrane region" description="Helical" evidence="1">
    <location>
        <begin position="46"/>
        <end position="66"/>
    </location>
</feature>
<feature type="transmembrane region" description="Helical" evidence="1">
    <location>
        <begin position="84"/>
        <end position="104"/>
    </location>
</feature>
<feature type="transmembrane region" description="Helical" evidence="1">
    <location>
        <begin position="107"/>
        <end position="127"/>
    </location>
</feature>
<feature type="transmembrane region" description="Helical" evidence="1">
    <location>
        <begin position="144"/>
        <end position="164"/>
    </location>
</feature>
<feature type="transmembrane region" description="Helical" evidence="1">
    <location>
        <begin position="185"/>
        <end position="205"/>
    </location>
</feature>
<feature type="transmembrane region" description="Helical" evidence="1">
    <location>
        <begin position="213"/>
        <end position="233"/>
    </location>
</feature>
<feature type="transmembrane region" description="Helical" evidence="1">
    <location>
        <begin position="246"/>
        <end position="266"/>
    </location>
</feature>
<protein>
    <recommendedName>
        <fullName evidence="1">Undecaprenyl-diphosphatase</fullName>
        <ecNumber evidence="1">3.6.1.27</ecNumber>
    </recommendedName>
    <alternativeName>
        <fullName evidence="1">Bacitracin resistance protein</fullName>
    </alternativeName>
    <alternativeName>
        <fullName evidence="1">Undecaprenyl pyrophosphate phosphatase</fullName>
    </alternativeName>
</protein>
<accession>Q2YJP6</accession>